<name>RL36_PROMP</name>
<dbReference type="EMBL" id="BX548174">
    <property type="protein sequence ID" value="CAE19997.1"/>
    <property type="molecule type" value="Genomic_DNA"/>
</dbReference>
<dbReference type="RefSeq" id="WP_011133166.1">
    <property type="nucleotide sequence ID" value="NC_005072.1"/>
</dbReference>
<dbReference type="SMR" id="Q7TU30"/>
<dbReference type="STRING" id="59919.PMM1538"/>
<dbReference type="GeneID" id="60200927"/>
<dbReference type="KEGG" id="pmm:PMM1538"/>
<dbReference type="eggNOG" id="COG0257">
    <property type="taxonomic scope" value="Bacteria"/>
</dbReference>
<dbReference type="HOGENOM" id="CLU_135723_6_2_3"/>
<dbReference type="OrthoDB" id="9802520at2"/>
<dbReference type="Proteomes" id="UP000001026">
    <property type="component" value="Chromosome"/>
</dbReference>
<dbReference type="GO" id="GO:0005737">
    <property type="term" value="C:cytoplasm"/>
    <property type="evidence" value="ECO:0007669"/>
    <property type="project" value="UniProtKB-ARBA"/>
</dbReference>
<dbReference type="GO" id="GO:1990904">
    <property type="term" value="C:ribonucleoprotein complex"/>
    <property type="evidence" value="ECO:0007669"/>
    <property type="project" value="UniProtKB-KW"/>
</dbReference>
<dbReference type="GO" id="GO:0005840">
    <property type="term" value="C:ribosome"/>
    <property type="evidence" value="ECO:0007669"/>
    <property type="project" value="UniProtKB-KW"/>
</dbReference>
<dbReference type="GO" id="GO:0003735">
    <property type="term" value="F:structural constituent of ribosome"/>
    <property type="evidence" value="ECO:0007669"/>
    <property type="project" value="InterPro"/>
</dbReference>
<dbReference type="GO" id="GO:0006412">
    <property type="term" value="P:translation"/>
    <property type="evidence" value="ECO:0007669"/>
    <property type="project" value="UniProtKB-UniRule"/>
</dbReference>
<dbReference type="HAMAP" id="MF_00251">
    <property type="entry name" value="Ribosomal_bL36"/>
    <property type="match status" value="1"/>
</dbReference>
<dbReference type="InterPro" id="IPR000473">
    <property type="entry name" value="Ribosomal_bL36"/>
</dbReference>
<dbReference type="InterPro" id="IPR035977">
    <property type="entry name" value="Ribosomal_bL36_sp"/>
</dbReference>
<dbReference type="NCBIfam" id="TIGR01022">
    <property type="entry name" value="rpmJ_bact"/>
    <property type="match status" value="1"/>
</dbReference>
<dbReference type="PANTHER" id="PTHR42888">
    <property type="entry name" value="50S RIBOSOMAL PROTEIN L36, CHLOROPLASTIC"/>
    <property type="match status" value="1"/>
</dbReference>
<dbReference type="PANTHER" id="PTHR42888:SF1">
    <property type="entry name" value="LARGE RIBOSOMAL SUBUNIT PROTEIN BL36C"/>
    <property type="match status" value="1"/>
</dbReference>
<dbReference type="Pfam" id="PF00444">
    <property type="entry name" value="Ribosomal_L36"/>
    <property type="match status" value="1"/>
</dbReference>
<dbReference type="SUPFAM" id="SSF57840">
    <property type="entry name" value="Ribosomal protein L36"/>
    <property type="match status" value="1"/>
</dbReference>
<dbReference type="PROSITE" id="PS00828">
    <property type="entry name" value="RIBOSOMAL_L36"/>
    <property type="match status" value="1"/>
</dbReference>
<feature type="chain" id="PRO_0000126238" description="Large ribosomal subunit protein bL36">
    <location>
        <begin position="1"/>
        <end position="38"/>
    </location>
</feature>
<organism>
    <name type="scientific">Prochlorococcus marinus subsp. pastoris (strain CCMP1986 / NIES-2087 / MED4)</name>
    <dbReference type="NCBI Taxonomy" id="59919"/>
    <lineage>
        <taxon>Bacteria</taxon>
        <taxon>Bacillati</taxon>
        <taxon>Cyanobacteriota</taxon>
        <taxon>Cyanophyceae</taxon>
        <taxon>Synechococcales</taxon>
        <taxon>Prochlorococcaceae</taxon>
        <taxon>Prochlorococcus</taxon>
    </lineage>
</organism>
<accession>Q7TU30</accession>
<keyword id="KW-0687">Ribonucleoprotein</keyword>
<keyword id="KW-0689">Ribosomal protein</keyword>
<evidence type="ECO:0000255" key="1">
    <source>
        <dbReference type="HAMAP-Rule" id="MF_00251"/>
    </source>
</evidence>
<evidence type="ECO:0000305" key="2"/>
<comment type="similarity">
    <text evidence="1">Belongs to the bacterial ribosomal protein bL36 family.</text>
</comment>
<gene>
    <name evidence="1" type="primary">rpmJ</name>
    <name type="synonym">rpl36</name>
    <name type="ordered locus">PMM1538</name>
</gene>
<protein>
    <recommendedName>
        <fullName evidence="1">Large ribosomal subunit protein bL36</fullName>
    </recommendedName>
    <alternativeName>
        <fullName evidence="2">50S ribosomal protein L36</fullName>
    </alternativeName>
</protein>
<sequence length="38" mass="4451">MKVRASVKKMCDKCRVIRRHGRVMVICTASPRHKQRQG</sequence>
<reference key="1">
    <citation type="journal article" date="2003" name="Nature">
        <title>Genome divergence in two Prochlorococcus ecotypes reflects oceanic niche differentiation.</title>
        <authorList>
            <person name="Rocap G."/>
            <person name="Larimer F.W."/>
            <person name="Lamerdin J.E."/>
            <person name="Malfatti S."/>
            <person name="Chain P."/>
            <person name="Ahlgren N.A."/>
            <person name="Arellano A."/>
            <person name="Coleman M."/>
            <person name="Hauser L."/>
            <person name="Hess W.R."/>
            <person name="Johnson Z.I."/>
            <person name="Land M.L."/>
            <person name="Lindell D."/>
            <person name="Post A.F."/>
            <person name="Regala W."/>
            <person name="Shah M."/>
            <person name="Shaw S.L."/>
            <person name="Steglich C."/>
            <person name="Sullivan M.B."/>
            <person name="Ting C.S."/>
            <person name="Tolonen A."/>
            <person name="Webb E.A."/>
            <person name="Zinser E.R."/>
            <person name="Chisholm S.W."/>
        </authorList>
    </citation>
    <scope>NUCLEOTIDE SEQUENCE [LARGE SCALE GENOMIC DNA]</scope>
    <source>
        <strain>CCMP1986 / NIES-2087 / MED4</strain>
    </source>
</reference>
<proteinExistence type="inferred from homology"/>